<reference key="1">
    <citation type="submission" date="2006-08" db="EMBL/GenBank/DDBJ databases">
        <title>Complete sequence of Alkalilimnicola ehrilichei MLHE-1.</title>
        <authorList>
            <person name="Copeland A."/>
            <person name="Lucas S."/>
            <person name="Lapidus A."/>
            <person name="Barry K."/>
            <person name="Detter J.C."/>
            <person name="Glavina del Rio T."/>
            <person name="Hammon N."/>
            <person name="Israni S."/>
            <person name="Dalin E."/>
            <person name="Tice H."/>
            <person name="Pitluck S."/>
            <person name="Sims D."/>
            <person name="Brettin T."/>
            <person name="Bruce D."/>
            <person name="Han C."/>
            <person name="Tapia R."/>
            <person name="Gilna P."/>
            <person name="Schmutz J."/>
            <person name="Larimer F."/>
            <person name="Land M."/>
            <person name="Hauser L."/>
            <person name="Kyrpides N."/>
            <person name="Mikhailova N."/>
            <person name="Oremland R.S."/>
            <person name="Hoeft S.E."/>
            <person name="Switzer-Blum J."/>
            <person name="Kulp T."/>
            <person name="King G."/>
            <person name="Tabita R."/>
            <person name="Witte B."/>
            <person name="Santini J.M."/>
            <person name="Basu P."/>
            <person name="Hollibaugh J.T."/>
            <person name="Xie G."/>
            <person name="Stolz J.F."/>
            <person name="Richardson P."/>
        </authorList>
    </citation>
    <scope>NUCLEOTIDE SEQUENCE [LARGE SCALE GENOMIC DNA]</scope>
    <source>
        <strain>ATCC BAA-1101 / DSM 17681 / MLHE-1</strain>
    </source>
</reference>
<proteinExistence type="inferred from homology"/>
<feature type="chain" id="PRO_0000314508" description="Ribosomal RNA large subunit methyltransferase M">
    <location>
        <begin position="1"/>
        <end position="360"/>
    </location>
</feature>
<feature type="active site" description="Proton acceptor" evidence="1">
    <location>
        <position position="309"/>
    </location>
</feature>
<feature type="binding site" evidence="1">
    <location>
        <position position="192"/>
    </location>
    <ligand>
        <name>S-adenosyl-L-methionine</name>
        <dbReference type="ChEBI" id="CHEBI:59789"/>
    </ligand>
</feature>
<feature type="binding site" evidence="1">
    <location>
        <begin position="225"/>
        <end position="228"/>
    </location>
    <ligand>
        <name>S-adenosyl-L-methionine</name>
        <dbReference type="ChEBI" id="CHEBI:59789"/>
    </ligand>
</feature>
<feature type="binding site" evidence="1">
    <location>
        <position position="244"/>
    </location>
    <ligand>
        <name>S-adenosyl-L-methionine</name>
        <dbReference type="ChEBI" id="CHEBI:59789"/>
    </ligand>
</feature>
<feature type="binding site" evidence="1">
    <location>
        <position position="264"/>
    </location>
    <ligand>
        <name>S-adenosyl-L-methionine</name>
        <dbReference type="ChEBI" id="CHEBI:59789"/>
    </ligand>
</feature>
<feature type="binding site" evidence="1">
    <location>
        <position position="280"/>
    </location>
    <ligand>
        <name>S-adenosyl-L-methionine</name>
        <dbReference type="ChEBI" id="CHEBI:59789"/>
    </ligand>
</feature>
<comment type="function">
    <text evidence="1">Catalyzes the 2'-O-methylation at nucleotide C2498 in 23S rRNA.</text>
</comment>
<comment type="catalytic activity">
    <reaction evidence="1">
        <text>cytidine(2498) in 23S rRNA + S-adenosyl-L-methionine = 2'-O-methylcytidine(2498) in 23S rRNA + S-adenosyl-L-homocysteine + H(+)</text>
        <dbReference type="Rhea" id="RHEA:42788"/>
        <dbReference type="Rhea" id="RHEA-COMP:10244"/>
        <dbReference type="Rhea" id="RHEA-COMP:10245"/>
        <dbReference type="ChEBI" id="CHEBI:15378"/>
        <dbReference type="ChEBI" id="CHEBI:57856"/>
        <dbReference type="ChEBI" id="CHEBI:59789"/>
        <dbReference type="ChEBI" id="CHEBI:74495"/>
        <dbReference type="ChEBI" id="CHEBI:82748"/>
        <dbReference type="EC" id="2.1.1.186"/>
    </reaction>
</comment>
<comment type="subunit">
    <text evidence="1">Monomer.</text>
</comment>
<comment type="subcellular location">
    <subcellularLocation>
        <location evidence="1">Cytoplasm</location>
    </subcellularLocation>
</comment>
<comment type="similarity">
    <text evidence="1">Belongs to the class I-like SAM-binding methyltransferase superfamily. RNA methyltransferase RlmE family. RlmM subfamily.</text>
</comment>
<gene>
    <name evidence="1" type="primary">rlmM</name>
    <name type="ordered locus">Mlg_1490</name>
</gene>
<evidence type="ECO:0000255" key="1">
    <source>
        <dbReference type="HAMAP-Rule" id="MF_01551"/>
    </source>
</evidence>
<sequence length="360" mass="39961">MTERDPIPTRHATRWLLQCRPGFGADLAAELAAWSSDAGVAGWPRVENDQGRVDFHSADGRPLPTPPALTFARQAWPVVADCPQLPERDRVGALLEALAPHLPEALAGVWLEHPDTNDGKALGRFCRKFRPHLERALRERGVALERAGAPRLHLWFADSRQVVAGLAPAGSGRPWPMGIPRLRLPRAAPSRSALKLEEAVGWLLTPVEREAALRPGMSAVDLGAAPGGWTWVLRQAGLHVTAVDNGPLAESLRADRAVRHLREDGFRYRPPHRVDWLVCDMVEQPHRVARLVRHWLVSGWCGRALFNLKLPMRRRWQCVAECRALVTGGSGELGWRSAQLYHDREEITVLAWRPAAGSRG</sequence>
<dbReference type="EC" id="2.1.1.186" evidence="1"/>
<dbReference type="EMBL" id="CP000453">
    <property type="protein sequence ID" value="ABI56839.1"/>
    <property type="molecule type" value="Genomic_DNA"/>
</dbReference>
<dbReference type="RefSeq" id="WP_011629234.1">
    <property type="nucleotide sequence ID" value="NC_008340.1"/>
</dbReference>
<dbReference type="SMR" id="Q0A8J8"/>
<dbReference type="KEGG" id="aeh:Mlg_1490"/>
<dbReference type="eggNOG" id="COG2933">
    <property type="taxonomic scope" value="Bacteria"/>
</dbReference>
<dbReference type="HOGENOM" id="CLU_043780_0_0_6"/>
<dbReference type="OrthoDB" id="154490at2"/>
<dbReference type="Proteomes" id="UP000001962">
    <property type="component" value="Chromosome"/>
</dbReference>
<dbReference type="GO" id="GO:0005737">
    <property type="term" value="C:cytoplasm"/>
    <property type="evidence" value="ECO:0007669"/>
    <property type="project" value="UniProtKB-SubCell"/>
</dbReference>
<dbReference type="GO" id="GO:0008757">
    <property type="term" value="F:S-adenosylmethionine-dependent methyltransferase activity"/>
    <property type="evidence" value="ECO:0007669"/>
    <property type="project" value="UniProtKB-UniRule"/>
</dbReference>
<dbReference type="GO" id="GO:0032259">
    <property type="term" value="P:methylation"/>
    <property type="evidence" value="ECO:0007669"/>
    <property type="project" value="UniProtKB-KW"/>
</dbReference>
<dbReference type="GO" id="GO:0006364">
    <property type="term" value="P:rRNA processing"/>
    <property type="evidence" value="ECO:0007669"/>
    <property type="project" value="UniProtKB-UniRule"/>
</dbReference>
<dbReference type="Gene3D" id="3.30.2300.20">
    <property type="match status" value="1"/>
</dbReference>
<dbReference type="Gene3D" id="3.30.70.2810">
    <property type="match status" value="1"/>
</dbReference>
<dbReference type="Gene3D" id="3.40.50.150">
    <property type="entry name" value="Vaccinia Virus protein VP39"/>
    <property type="match status" value="1"/>
</dbReference>
<dbReference type="HAMAP" id="MF_01551">
    <property type="entry name" value="23SrRNA_methyltr_M"/>
    <property type="match status" value="1"/>
</dbReference>
<dbReference type="InterPro" id="IPR040739">
    <property type="entry name" value="RlmM_FDX"/>
</dbReference>
<dbReference type="InterPro" id="IPR048646">
    <property type="entry name" value="RlmM_THUMP-like"/>
</dbReference>
<dbReference type="InterPro" id="IPR002877">
    <property type="entry name" value="RNA_MeTrfase_FtsJ_dom"/>
</dbReference>
<dbReference type="InterPro" id="IPR011224">
    <property type="entry name" value="rRNA_MeTrfase_M"/>
</dbReference>
<dbReference type="InterPro" id="IPR029063">
    <property type="entry name" value="SAM-dependent_MTases_sf"/>
</dbReference>
<dbReference type="NCBIfam" id="NF008734">
    <property type="entry name" value="PRK11760.1"/>
    <property type="match status" value="1"/>
</dbReference>
<dbReference type="PANTHER" id="PTHR37524">
    <property type="entry name" value="RIBOSOMAL RNA LARGE SUBUNIT METHYLTRANSFERASE M"/>
    <property type="match status" value="1"/>
</dbReference>
<dbReference type="PANTHER" id="PTHR37524:SF2">
    <property type="entry name" value="RIBOSOMAL RNA METHYLTRANSFERASE FTSJ DOMAIN-CONTAINING PROTEIN"/>
    <property type="match status" value="1"/>
</dbReference>
<dbReference type="Pfam" id="PF01728">
    <property type="entry name" value="FtsJ"/>
    <property type="match status" value="1"/>
</dbReference>
<dbReference type="Pfam" id="PF18125">
    <property type="entry name" value="RlmM_FDX"/>
    <property type="match status" value="1"/>
</dbReference>
<dbReference type="Pfam" id="PF21239">
    <property type="entry name" value="RLMM_N"/>
    <property type="match status" value="1"/>
</dbReference>
<dbReference type="PIRSF" id="PIRSF028774">
    <property type="entry name" value="UCP028774"/>
    <property type="match status" value="1"/>
</dbReference>
<dbReference type="SUPFAM" id="SSF53335">
    <property type="entry name" value="S-adenosyl-L-methionine-dependent methyltransferases"/>
    <property type="match status" value="1"/>
</dbReference>
<protein>
    <recommendedName>
        <fullName evidence="1">Ribosomal RNA large subunit methyltransferase M</fullName>
        <ecNumber evidence="1">2.1.1.186</ecNumber>
    </recommendedName>
    <alternativeName>
        <fullName evidence="1">23S rRNA (cytidine2498-2'-O)-methyltransferase</fullName>
    </alternativeName>
    <alternativeName>
        <fullName evidence="1">23S rRNA 2'-O-ribose methyltransferase RlmM</fullName>
    </alternativeName>
</protein>
<keyword id="KW-0963">Cytoplasm</keyword>
<keyword id="KW-0489">Methyltransferase</keyword>
<keyword id="KW-1185">Reference proteome</keyword>
<keyword id="KW-0698">rRNA processing</keyword>
<keyword id="KW-0949">S-adenosyl-L-methionine</keyword>
<keyword id="KW-0808">Transferase</keyword>
<accession>Q0A8J8</accession>
<organism>
    <name type="scientific">Alkalilimnicola ehrlichii (strain ATCC BAA-1101 / DSM 17681 / MLHE-1)</name>
    <dbReference type="NCBI Taxonomy" id="187272"/>
    <lineage>
        <taxon>Bacteria</taxon>
        <taxon>Pseudomonadati</taxon>
        <taxon>Pseudomonadota</taxon>
        <taxon>Gammaproteobacteria</taxon>
        <taxon>Chromatiales</taxon>
        <taxon>Ectothiorhodospiraceae</taxon>
        <taxon>Alkalilimnicola</taxon>
    </lineage>
</organism>
<name>RLMM_ALKEH</name>